<name>BDNF_CHABO</name>
<keyword id="KW-0165">Cleavage on pair of basic residues</keyword>
<keyword id="KW-1015">Disulfide bond</keyword>
<keyword id="KW-0325">Glycoprotein</keyword>
<keyword id="KW-0339">Growth factor</keyword>
<keyword id="KW-0964">Secreted</keyword>
<keyword id="KW-0732">Signal</keyword>
<feature type="signal peptide" evidence="2">
    <location>
        <begin position="1" status="less than"/>
        <end position="5"/>
    </location>
</feature>
<feature type="propeptide" id="PRO_0000346666" evidence="1">
    <location>
        <begin position="6"/>
        <end position="114"/>
    </location>
</feature>
<feature type="chain" id="PRO_0000346667" description="Neurotrophic factor BDNF">
    <location>
        <begin position="115"/>
        <end position="223" status="greater than"/>
    </location>
</feature>
<feature type="glycosylation site" description="N-linked (GlcNAc...) asparagine" evidence="2">
    <location>
        <position position="107"/>
    </location>
</feature>
<feature type="disulfide bond" evidence="1">
    <location>
        <begin position="127"/>
        <end position="194"/>
    </location>
</feature>
<feature type="disulfide bond" evidence="1">
    <location>
        <begin position="172"/>
        <end position="223"/>
    </location>
</feature>
<feature type="non-terminal residue">
    <location>
        <position position="1"/>
    </location>
</feature>
<feature type="non-terminal residue">
    <location>
        <position position="223"/>
    </location>
</feature>
<proteinExistence type="inferred from homology"/>
<reference key="1">
    <citation type="journal article" date="2006" name="Mol. Phylogenet. Evol.">
        <title>Dispersal and vicariance: the complex evolutionary history of boid snakes.</title>
        <authorList>
            <person name="Noonan B.P."/>
            <person name="Chippindale P.T."/>
        </authorList>
    </citation>
    <scope>NUCLEOTIDE SEQUENCE [GENOMIC DNA]</scope>
</reference>
<evidence type="ECO:0000250" key="1"/>
<evidence type="ECO:0000255" key="2"/>
<evidence type="ECO:0000305" key="3"/>
<dbReference type="EMBL" id="AY988042">
    <property type="protein sequence ID" value="AAY44249.1"/>
    <property type="molecule type" value="Genomic_DNA"/>
</dbReference>
<dbReference type="SMR" id="Q1X6Z6"/>
<dbReference type="GlyCosmos" id="Q1X6Z6">
    <property type="glycosylation" value="1 site, No reported glycans"/>
</dbReference>
<dbReference type="GO" id="GO:0030424">
    <property type="term" value="C:axon"/>
    <property type="evidence" value="ECO:0007669"/>
    <property type="project" value="TreeGrafter"/>
</dbReference>
<dbReference type="GO" id="GO:0030425">
    <property type="term" value="C:dendrite"/>
    <property type="evidence" value="ECO:0007669"/>
    <property type="project" value="TreeGrafter"/>
</dbReference>
<dbReference type="GO" id="GO:0005615">
    <property type="term" value="C:extracellular space"/>
    <property type="evidence" value="ECO:0007669"/>
    <property type="project" value="TreeGrafter"/>
</dbReference>
<dbReference type="GO" id="GO:0008021">
    <property type="term" value="C:synaptic vesicle"/>
    <property type="evidence" value="ECO:0007669"/>
    <property type="project" value="TreeGrafter"/>
</dbReference>
<dbReference type="GO" id="GO:0008083">
    <property type="term" value="F:growth factor activity"/>
    <property type="evidence" value="ECO:0007669"/>
    <property type="project" value="UniProtKB-KW"/>
</dbReference>
<dbReference type="GO" id="GO:0005163">
    <property type="term" value="F:nerve growth factor receptor binding"/>
    <property type="evidence" value="ECO:0007669"/>
    <property type="project" value="TreeGrafter"/>
</dbReference>
<dbReference type="GO" id="GO:0007169">
    <property type="term" value="P:cell surface receptor protein tyrosine kinase signaling pathway"/>
    <property type="evidence" value="ECO:0007669"/>
    <property type="project" value="TreeGrafter"/>
</dbReference>
<dbReference type="GO" id="GO:0050804">
    <property type="term" value="P:modulation of chemical synaptic transmission"/>
    <property type="evidence" value="ECO:0007669"/>
    <property type="project" value="TreeGrafter"/>
</dbReference>
<dbReference type="GO" id="GO:0043524">
    <property type="term" value="P:negative regulation of neuron apoptotic process"/>
    <property type="evidence" value="ECO:0007669"/>
    <property type="project" value="TreeGrafter"/>
</dbReference>
<dbReference type="GO" id="GO:0021675">
    <property type="term" value="P:nerve development"/>
    <property type="evidence" value="ECO:0007669"/>
    <property type="project" value="TreeGrafter"/>
</dbReference>
<dbReference type="GO" id="GO:0038180">
    <property type="term" value="P:nerve growth factor signaling pathway"/>
    <property type="evidence" value="ECO:0007669"/>
    <property type="project" value="TreeGrafter"/>
</dbReference>
<dbReference type="GO" id="GO:0048812">
    <property type="term" value="P:neuron projection morphogenesis"/>
    <property type="evidence" value="ECO:0007669"/>
    <property type="project" value="TreeGrafter"/>
</dbReference>
<dbReference type="FunFam" id="2.10.90.10:FF:000002">
    <property type="entry name" value="Brain-derived neurotrophic factor"/>
    <property type="match status" value="1"/>
</dbReference>
<dbReference type="Gene3D" id="2.10.90.10">
    <property type="entry name" value="Cystine-knot cytokines"/>
    <property type="match status" value="1"/>
</dbReference>
<dbReference type="InterPro" id="IPR020430">
    <property type="entry name" value="Brain-der_neurotrophic_factor"/>
</dbReference>
<dbReference type="InterPro" id="IPR029034">
    <property type="entry name" value="Cystine-knot_cytokine"/>
</dbReference>
<dbReference type="InterPro" id="IPR020408">
    <property type="entry name" value="Nerve_growth_factor-like"/>
</dbReference>
<dbReference type="InterPro" id="IPR002072">
    <property type="entry name" value="Nerve_growth_factor-rel"/>
</dbReference>
<dbReference type="InterPro" id="IPR019846">
    <property type="entry name" value="Nerve_growth_factor_CS"/>
</dbReference>
<dbReference type="PANTHER" id="PTHR11589:SF3">
    <property type="entry name" value="BRAIN-DERIVED NEUROTROPHIC FACTOR"/>
    <property type="match status" value="1"/>
</dbReference>
<dbReference type="PANTHER" id="PTHR11589">
    <property type="entry name" value="NERVE GROWTH FACTOR NGF -RELATED"/>
    <property type="match status" value="1"/>
</dbReference>
<dbReference type="Pfam" id="PF00243">
    <property type="entry name" value="NGF"/>
    <property type="match status" value="1"/>
</dbReference>
<dbReference type="PIRSF" id="PIRSF001789">
    <property type="entry name" value="NGF"/>
    <property type="match status" value="1"/>
</dbReference>
<dbReference type="PRINTS" id="PR01912">
    <property type="entry name" value="BDNFACTOR"/>
</dbReference>
<dbReference type="PRINTS" id="PR00268">
    <property type="entry name" value="NGF"/>
</dbReference>
<dbReference type="SMART" id="SM00140">
    <property type="entry name" value="NGF"/>
    <property type="match status" value="1"/>
</dbReference>
<dbReference type="SUPFAM" id="SSF57501">
    <property type="entry name" value="Cystine-knot cytokines"/>
    <property type="match status" value="1"/>
</dbReference>
<dbReference type="PROSITE" id="PS00248">
    <property type="entry name" value="NGF_1"/>
    <property type="match status" value="1"/>
</dbReference>
<dbReference type="PROSITE" id="PS50270">
    <property type="entry name" value="NGF_2"/>
    <property type="match status" value="1"/>
</dbReference>
<accession>Q1X6Z6</accession>
<comment type="function">
    <text evidence="1">Promotes the survival of neuronal populations that are all located either in the central nervous system or directly connected to it.</text>
</comment>
<comment type="subcellular location">
    <subcellularLocation>
        <location evidence="1">Secreted</location>
    </subcellularLocation>
</comment>
<comment type="similarity">
    <text evidence="3">Belongs to the NGF-beta family.</text>
</comment>
<organism>
    <name type="scientific">Charina bottae</name>
    <name type="common">Northern rubber boa</name>
    <dbReference type="NCBI Taxonomy" id="51858"/>
    <lineage>
        <taxon>Eukaryota</taxon>
        <taxon>Metazoa</taxon>
        <taxon>Chordata</taxon>
        <taxon>Craniata</taxon>
        <taxon>Vertebrata</taxon>
        <taxon>Euteleostomi</taxon>
        <taxon>Lepidosauria</taxon>
        <taxon>Squamata</taxon>
        <taxon>Bifurcata</taxon>
        <taxon>Unidentata</taxon>
        <taxon>Episquamata</taxon>
        <taxon>Toxicofera</taxon>
        <taxon>Serpentes</taxon>
        <taxon>Henophidia</taxon>
        <taxon>Boidae</taxon>
        <taxon>Erycinae</taxon>
        <taxon>Charina</taxon>
    </lineage>
</organism>
<sequence length="223" mass="25074">SCMKAAPMKEVSIRGQGSLAYPGLRTQGNLETLSGPNDATRGLTSLADTFEHVIEELLDEQQVVQPSKENKDADLYSSRVMLSSQVPLEPPLLFLLEEYKNYLDAANMSMRVRRHSDPARRGELSVCDSISEWVTAAEKKTAVDMSGATVTVLEKVPVPKGQLKQYFYETKCSSKGYAKEGCRGIDKRYWNSQCRTTQSYVRALTMDNKKRVGWRFIRIDTSC</sequence>
<gene>
    <name type="primary">BDNF</name>
</gene>
<protein>
    <recommendedName>
        <fullName evidence="3">Neurotrophic factor BDNF precursor form</fullName>
        <shortName>proBDNF</shortName>
    </recommendedName>
    <alternativeName>
        <fullName>Brain-derived neurotrophic factor</fullName>
    </alternativeName>
    <component>
        <recommendedName>
            <fullName>Neurotrophic factor BDNF</fullName>
        </recommendedName>
    </component>
</protein>